<accession>A7NAX2</accession>
<dbReference type="EC" id="2.7.7.6" evidence="1"/>
<dbReference type="EMBL" id="CP000803">
    <property type="protein sequence ID" value="ABU61125.1"/>
    <property type="molecule type" value="Genomic_DNA"/>
</dbReference>
<dbReference type="RefSeq" id="WP_010031988.1">
    <property type="nucleotide sequence ID" value="NC_009749.1"/>
</dbReference>
<dbReference type="SMR" id="A7NAX2"/>
<dbReference type="KEGG" id="fta:FTA_0649"/>
<dbReference type="HOGENOM" id="CLU_053084_0_0_6"/>
<dbReference type="GO" id="GO:0005737">
    <property type="term" value="C:cytoplasm"/>
    <property type="evidence" value="ECO:0007669"/>
    <property type="project" value="UniProtKB-ARBA"/>
</dbReference>
<dbReference type="GO" id="GO:0000428">
    <property type="term" value="C:DNA-directed RNA polymerase complex"/>
    <property type="evidence" value="ECO:0007669"/>
    <property type="project" value="UniProtKB-KW"/>
</dbReference>
<dbReference type="GO" id="GO:0003677">
    <property type="term" value="F:DNA binding"/>
    <property type="evidence" value="ECO:0007669"/>
    <property type="project" value="UniProtKB-UniRule"/>
</dbReference>
<dbReference type="GO" id="GO:0003899">
    <property type="term" value="F:DNA-directed RNA polymerase activity"/>
    <property type="evidence" value="ECO:0007669"/>
    <property type="project" value="UniProtKB-UniRule"/>
</dbReference>
<dbReference type="GO" id="GO:0046983">
    <property type="term" value="F:protein dimerization activity"/>
    <property type="evidence" value="ECO:0007669"/>
    <property type="project" value="InterPro"/>
</dbReference>
<dbReference type="GO" id="GO:0006351">
    <property type="term" value="P:DNA-templated transcription"/>
    <property type="evidence" value="ECO:0007669"/>
    <property type="project" value="UniProtKB-UniRule"/>
</dbReference>
<dbReference type="FunFam" id="1.10.150.20:FF:000001">
    <property type="entry name" value="DNA-directed RNA polymerase subunit alpha"/>
    <property type="match status" value="1"/>
</dbReference>
<dbReference type="Gene3D" id="1.10.150.20">
    <property type="entry name" value="5' to 3' exonuclease, C-terminal subdomain"/>
    <property type="match status" value="1"/>
</dbReference>
<dbReference type="Gene3D" id="2.170.120.12">
    <property type="entry name" value="DNA-directed RNA polymerase, insert domain"/>
    <property type="match status" value="1"/>
</dbReference>
<dbReference type="Gene3D" id="3.30.1360.10">
    <property type="entry name" value="RNA polymerase, RBP11-like subunit"/>
    <property type="match status" value="1"/>
</dbReference>
<dbReference type="HAMAP" id="MF_00059">
    <property type="entry name" value="RNApol_bact_RpoA"/>
    <property type="match status" value="1"/>
</dbReference>
<dbReference type="InterPro" id="IPR011262">
    <property type="entry name" value="DNA-dir_RNA_pol_insert"/>
</dbReference>
<dbReference type="InterPro" id="IPR011263">
    <property type="entry name" value="DNA-dir_RNA_pol_RpoA/D/Rpb3"/>
</dbReference>
<dbReference type="InterPro" id="IPR011773">
    <property type="entry name" value="DNA-dir_RpoA"/>
</dbReference>
<dbReference type="InterPro" id="IPR036603">
    <property type="entry name" value="RBP11-like"/>
</dbReference>
<dbReference type="InterPro" id="IPR011260">
    <property type="entry name" value="RNAP_asu_C"/>
</dbReference>
<dbReference type="InterPro" id="IPR036643">
    <property type="entry name" value="RNApol_insert_sf"/>
</dbReference>
<dbReference type="NCBIfam" id="NF003513">
    <property type="entry name" value="PRK05182.1-2"/>
    <property type="match status" value="1"/>
</dbReference>
<dbReference type="Pfam" id="PF01000">
    <property type="entry name" value="RNA_pol_A_bac"/>
    <property type="match status" value="1"/>
</dbReference>
<dbReference type="Pfam" id="PF03118">
    <property type="entry name" value="RNA_pol_A_CTD"/>
    <property type="match status" value="1"/>
</dbReference>
<dbReference type="Pfam" id="PF01193">
    <property type="entry name" value="RNA_pol_L"/>
    <property type="match status" value="1"/>
</dbReference>
<dbReference type="SMART" id="SM00662">
    <property type="entry name" value="RPOLD"/>
    <property type="match status" value="1"/>
</dbReference>
<dbReference type="SUPFAM" id="SSF47789">
    <property type="entry name" value="C-terminal domain of RNA polymerase alpha subunit"/>
    <property type="match status" value="1"/>
</dbReference>
<dbReference type="SUPFAM" id="SSF56553">
    <property type="entry name" value="Insert subdomain of RNA polymerase alpha subunit"/>
    <property type="match status" value="1"/>
</dbReference>
<dbReference type="SUPFAM" id="SSF55257">
    <property type="entry name" value="RBP11-like subunits of RNA polymerase"/>
    <property type="match status" value="1"/>
</dbReference>
<name>RPOA2_FRATF</name>
<evidence type="ECO:0000255" key="1">
    <source>
        <dbReference type="HAMAP-Rule" id="MF_00059"/>
    </source>
</evidence>
<feature type="chain" id="PRO_0000323635" description="DNA-directed RNA polymerase subunit alpha 2">
    <location>
        <begin position="1"/>
        <end position="317"/>
    </location>
</feature>
<feature type="region of interest" description="Alpha N-terminal domain (alpha-NTD)" evidence="1">
    <location>
        <begin position="1"/>
        <end position="227"/>
    </location>
</feature>
<feature type="region of interest" description="Alpha C-terminal domain (alpha-CTD)" evidence="1">
    <location>
        <begin position="241"/>
        <end position="317"/>
    </location>
</feature>
<proteinExistence type="inferred from homology"/>
<keyword id="KW-0240">DNA-directed RNA polymerase</keyword>
<keyword id="KW-0548">Nucleotidyltransferase</keyword>
<keyword id="KW-0804">Transcription</keyword>
<keyword id="KW-0808">Transferase</keyword>
<organism>
    <name type="scientific">Francisella tularensis subsp. holarctica (strain FTNF002-00 / FTA)</name>
    <dbReference type="NCBI Taxonomy" id="458234"/>
    <lineage>
        <taxon>Bacteria</taxon>
        <taxon>Pseudomonadati</taxon>
        <taxon>Pseudomonadota</taxon>
        <taxon>Gammaproteobacteria</taxon>
        <taxon>Thiotrichales</taxon>
        <taxon>Francisellaceae</taxon>
        <taxon>Francisella</taxon>
    </lineage>
</organism>
<gene>
    <name evidence="1" type="primary">rpoA2</name>
    <name type="ordered locus">FTA_0649</name>
</gene>
<sequence>MALENLLHPTNIKIDEYAKNATKFSFEALERGVGYTLGFALKQTMLYSIAGACVTSIKINDGKVTSLEDVIPCDETVADIILNVKSLSVTLAEDVETGTITFELSGSEEEIFSEEAKLSEGLAITEEVFICSYNGGKKLKIEAKVEKGVGFRPAQDNFKDCEFLLDATFSPVVFCDFEIKDARVGRRTDLDKLELNIKTNGNVNCEEALRLAATKIQNQLRNIVDIEEINKGIFVEDPKDINPILLKHVEELNLTARSSNCLKAVNIRLIGELVQKTENELLKAPNFGKKSLTEIKDKLSELGLSLGTLIENWPQDL</sequence>
<reference key="1">
    <citation type="journal article" date="2009" name="PLoS ONE">
        <title>Complete genome sequence of Francisella tularensis subspecies holarctica FTNF002-00.</title>
        <authorList>
            <person name="Barabote R.D."/>
            <person name="Xie G."/>
            <person name="Brettin T.S."/>
            <person name="Hinrichs S.H."/>
            <person name="Fey P.D."/>
            <person name="Jay J.J."/>
            <person name="Engle J.L."/>
            <person name="Godbole S.D."/>
            <person name="Noronha J.M."/>
            <person name="Scheuermann R.H."/>
            <person name="Zhou L.W."/>
            <person name="Lion C."/>
            <person name="Dempsey M.P."/>
        </authorList>
    </citation>
    <scope>NUCLEOTIDE SEQUENCE [LARGE SCALE GENOMIC DNA]</scope>
    <source>
        <strain>FTNF002-00 / FTA</strain>
    </source>
</reference>
<protein>
    <recommendedName>
        <fullName evidence="1">DNA-directed RNA polymerase subunit alpha 2</fullName>
        <shortName evidence="1">RNAP subunit alpha 2</shortName>
        <ecNumber evidence="1">2.7.7.6</ecNumber>
    </recommendedName>
    <alternativeName>
        <fullName evidence="1">RNA polymerase subunit alpha 2</fullName>
    </alternativeName>
    <alternativeName>
        <fullName evidence="1">Transcriptase subunit alpha 2</fullName>
    </alternativeName>
</protein>
<comment type="function">
    <text evidence="1">DNA-dependent RNA polymerase catalyzes the transcription of DNA into RNA using the four ribonucleoside triphosphates as substrates.</text>
</comment>
<comment type="catalytic activity">
    <reaction evidence="1">
        <text>RNA(n) + a ribonucleoside 5'-triphosphate = RNA(n+1) + diphosphate</text>
        <dbReference type="Rhea" id="RHEA:21248"/>
        <dbReference type="Rhea" id="RHEA-COMP:14527"/>
        <dbReference type="Rhea" id="RHEA-COMP:17342"/>
        <dbReference type="ChEBI" id="CHEBI:33019"/>
        <dbReference type="ChEBI" id="CHEBI:61557"/>
        <dbReference type="ChEBI" id="CHEBI:140395"/>
        <dbReference type="EC" id="2.7.7.6"/>
    </reaction>
</comment>
<comment type="subunit">
    <text evidence="1">Homodimer. The RNAP catalytic core consists of 2 alpha, 1 beta, 1 beta' and 1 omega subunit. When a sigma factor is associated with the core the holoenzyme is formed, which can initiate transcription.</text>
</comment>
<comment type="domain">
    <text evidence="1">The N-terminal domain is essential for RNAP assembly and basal transcription, whereas the C-terminal domain is involved in interaction with transcriptional regulators and with upstream promoter elements.</text>
</comment>
<comment type="similarity">
    <text evidence="1">Belongs to the RNA polymerase alpha chain family.</text>
</comment>